<proteinExistence type="evidence at protein level"/>
<feature type="chain" id="PRO_0000322557" description="Protein pangolin, isoform J">
    <location>
        <begin position="1"/>
        <end position="1192"/>
    </location>
</feature>
<feature type="DNA-binding region" description="HMG box" evidence="2">
    <location>
        <begin position="714"/>
        <end position="782"/>
    </location>
</feature>
<feature type="region of interest" description="Disordered" evidence="3">
    <location>
        <begin position="691"/>
        <end position="713"/>
    </location>
</feature>
<feature type="region of interest" description="Disordered" evidence="3">
    <location>
        <begin position="790"/>
        <end position="812"/>
    </location>
</feature>
<feature type="region of interest" description="Disordered" evidence="3">
    <location>
        <begin position="847"/>
        <end position="916"/>
    </location>
</feature>
<feature type="region of interest" description="Disordered" evidence="3">
    <location>
        <begin position="955"/>
        <end position="986"/>
    </location>
</feature>
<feature type="region of interest" description="Disordered" evidence="3">
    <location>
        <begin position="1136"/>
        <end position="1192"/>
    </location>
</feature>
<feature type="short sequence motif" description="Nuclear localization signal" evidence="1">
    <location>
        <begin position="351"/>
        <end position="357"/>
    </location>
</feature>
<feature type="compositionally biased region" description="Acidic residues" evidence="3">
    <location>
        <begin position="862"/>
        <end position="871"/>
    </location>
</feature>
<feature type="compositionally biased region" description="Low complexity" evidence="3">
    <location>
        <begin position="898"/>
        <end position="915"/>
    </location>
</feature>
<feature type="compositionally biased region" description="Low complexity" evidence="3">
    <location>
        <begin position="957"/>
        <end position="986"/>
    </location>
</feature>
<feature type="compositionally biased region" description="Polar residues" evidence="3">
    <location>
        <begin position="1140"/>
        <end position="1162"/>
    </location>
</feature>
<feature type="compositionally biased region" description="Polar residues" evidence="3">
    <location>
        <begin position="1170"/>
        <end position="1192"/>
    </location>
</feature>
<protein>
    <recommendedName>
        <fullName>Protein pangolin, isoform J</fullName>
    </recommendedName>
    <alternativeName>
        <fullName>dTCF</fullName>
    </alternativeName>
</protein>
<comment type="function">
    <text evidence="5 6 7">Segment polarity protein. Functions together with arm to transduce the Wingless (Wg) signal in embryos and in developing adult tissues. Acts as a transcriptional activator, but in the absence of arm, it binds to gro and acts as a transcriptional repressor of wg-responsive genes.</text>
</comment>
<comment type="subunit">
    <text evidence="7">Binds to the beta-catenin homolog arm or to gro.</text>
</comment>
<comment type="subcellular location">
    <subcellularLocation>
        <location evidence="2 7">Nucleus</location>
    </subcellularLocation>
</comment>
<comment type="alternative products">
    <event type="alternative splicing"/>
    <isoform>
        <id>Q8IMA8-1</id>
        <name evidence="4">J</name>
        <sequence type="displayed"/>
    </isoform>
    <isoform>
        <id>P91943-6</id>
        <name>S</name>
        <sequence type="external"/>
    </isoform>
    <isoform>
        <id>P91943-3</id>
        <name evidence="4">A</name>
        <name evidence="4">C</name>
        <name evidence="4">D</name>
        <name evidence="4">E</name>
        <name evidence="4">F</name>
        <name evidence="4">G</name>
        <sequence type="external"/>
    </isoform>
    <isoform>
        <id>P91943-4</id>
        <name evidence="4">H</name>
        <sequence type="external"/>
    </isoform>
    <isoform>
        <id>P91943-5</id>
        <name evidence="4">I</name>
        <sequence type="external"/>
    </isoform>
</comment>
<comment type="disruption phenotype">
    <text evidence="6">Flies exhibit a segment polarity phenotype and altered expression of the wg target genes en and Ubx.</text>
</comment>
<comment type="similarity">
    <text evidence="1">Belongs to the TCF/LEF family.</text>
</comment>
<accession>Q8IMA8</accession>
<accession>A0AVW4</accession>
<name>PANG2_DROME</name>
<gene>
    <name evidence="12" type="primary">pan</name>
    <name evidence="8" type="synonym">TCF</name>
    <name type="ORF">CG34403</name>
</gene>
<keyword id="KW-0010">Activator</keyword>
<keyword id="KW-0025">Alternative splicing</keyword>
<keyword id="KW-0217">Developmental protein</keyword>
<keyword id="KW-0238">DNA-binding</keyword>
<keyword id="KW-0539">Nucleus</keyword>
<keyword id="KW-1185">Reference proteome</keyword>
<keyword id="KW-0678">Repressor</keyword>
<keyword id="KW-0709">Segmentation polarity protein</keyword>
<keyword id="KW-0804">Transcription</keyword>
<keyword id="KW-0805">Transcription regulation</keyword>
<keyword id="KW-0879">Wnt signaling pathway</keyword>
<sequence length="1192" mass="132080">MPHCGTTNSEINLNSNELISYQKKKSNEDLQKKHDKKCSINLKTSQVPDGGFNNQYTQLTANKIEQYNCNDLDKVCIVPSSRSDGMEASFSELLLSPNKLISQPWQTAEEIENWQNDSFRQRNEMFSCIYTNSMLNQQPCSQQQLLATQLLYARLLRSQLAEREFHSNKFNMVHYSGSKKTMLREDELLSTPSSQDNNNNIKLIKDIENSISCVDPPLFEFSNVHQRAEQKNKQDDKNCYSPKLKSNKEALDGYDLQHTCDFIREQKNILIDIKKKLDNLSDSSGKFRKRLSVRQSHIEVNNGSNSALEESVRRQLNGNRKSIENLLEEVKRLYNQWSSAELYYVRSLQRLGLPSEEDGEYTSTPTHTIMALAAIALSNESILPQKTNAVHSKIPDVESESDFFLTSAKPKTLVEIEDIILQLASSVNMHQSSSASTPHESYSDSVKSDCEESNSAPTCIWHSTRQTFRHKKDVEPCSTAAEIILEYASLSSSSNIETSRLLTSASNLTDVTENYNVTTQLPIVFNYNRESSAESIVTDPLLVPEFSTAPSTPSTGSNSGCSTGMVSGIFGLSQNRRKQRLARHIETLTTNSFKSNAIRGNVDNEITNQLKTSPSIRALPTENVSHLITKTLSSANASLTAQELSITNLFKERLCALQGNAGSMKTEIFPMIDAPYDLSIGSKTKHMNLEAKHTSNAQSNESKETTNDKKKPHIKKPLNAFMLYMKEMRAKVVAECTLKESAAINQILGRRWHELSREEQSKYYEKARQERQLHMELYPGWSARDNYGYVSKKKKRKKDRSTTDSGGNNMKKCRARFGLDQQSQWCKPCRRKKKCIRYMEALNGNGPAEDGSCFDEHGSQLSDDDEDDYDDDKLGGSCGSADETNKIEDEDSESLNQSMPSPGCLSGLSSLQSPSTTMSLASPLNMNANSATNVIFPASSNALLIVGADQPTAQQRPTLVSTSGSSSGSTSSISTTPNTSSTVSPVTCMTGPCLGSSQERAMMLGNRFSHLGMGLSPPVVSTSTSKSEPFFKPHPTVCNNPIFALPSIGNCSLNISSMPNTSRNPIGANPRDINNPLSINQLTKRREYKNVELIEASESKTIVAHAATSIIQHVAVNGYHANHSLLNSNLGHLHHQLNNRTENPNRSEQTMLSVSNHSVNSSECHKESDSQAIVSSNPPNAGSSDNGVISVS</sequence>
<reference evidence="10" key="1">
    <citation type="journal article" date="2000" name="Science">
        <title>The genome sequence of Drosophila melanogaster.</title>
        <authorList>
            <person name="Adams M.D."/>
            <person name="Celniker S.E."/>
            <person name="Holt R.A."/>
            <person name="Evans C.A."/>
            <person name="Gocayne J.D."/>
            <person name="Amanatides P.G."/>
            <person name="Scherer S.E."/>
            <person name="Li P.W."/>
            <person name="Hoskins R.A."/>
            <person name="Galle R.F."/>
            <person name="George R.A."/>
            <person name="Lewis S.E."/>
            <person name="Richards S."/>
            <person name="Ashburner M."/>
            <person name="Henderson S.N."/>
            <person name="Sutton G.G."/>
            <person name="Wortman J.R."/>
            <person name="Yandell M.D."/>
            <person name="Zhang Q."/>
            <person name="Chen L.X."/>
            <person name="Brandon R.C."/>
            <person name="Rogers Y.-H.C."/>
            <person name="Blazej R.G."/>
            <person name="Champe M."/>
            <person name="Pfeiffer B.D."/>
            <person name="Wan K.H."/>
            <person name="Doyle C."/>
            <person name="Baxter E.G."/>
            <person name="Helt G."/>
            <person name="Nelson C.R."/>
            <person name="Miklos G.L.G."/>
            <person name="Abril J.F."/>
            <person name="Agbayani A."/>
            <person name="An H.-J."/>
            <person name="Andrews-Pfannkoch C."/>
            <person name="Baldwin D."/>
            <person name="Ballew R.M."/>
            <person name="Basu A."/>
            <person name="Baxendale J."/>
            <person name="Bayraktaroglu L."/>
            <person name="Beasley E.M."/>
            <person name="Beeson K.Y."/>
            <person name="Benos P.V."/>
            <person name="Berman B.P."/>
            <person name="Bhandari D."/>
            <person name="Bolshakov S."/>
            <person name="Borkova D."/>
            <person name="Botchan M.R."/>
            <person name="Bouck J."/>
            <person name="Brokstein P."/>
            <person name="Brottier P."/>
            <person name="Burtis K.C."/>
            <person name="Busam D.A."/>
            <person name="Butler H."/>
            <person name="Cadieu E."/>
            <person name="Center A."/>
            <person name="Chandra I."/>
            <person name="Cherry J.M."/>
            <person name="Cawley S."/>
            <person name="Dahlke C."/>
            <person name="Davenport L.B."/>
            <person name="Davies P."/>
            <person name="de Pablos B."/>
            <person name="Delcher A."/>
            <person name="Deng Z."/>
            <person name="Mays A.D."/>
            <person name="Dew I."/>
            <person name="Dietz S.M."/>
            <person name="Dodson K."/>
            <person name="Doup L.E."/>
            <person name="Downes M."/>
            <person name="Dugan-Rocha S."/>
            <person name="Dunkov B.C."/>
            <person name="Dunn P."/>
            <person name="Durbin K.J."/>
            <person name="Evangelista C.C."/>
            <person name="Ferraz C."/>
            <person name="Ferriera S."/>
            <person name="Fleischmann W."/>
            <person name="Fosler C."/>
            <person name="Gabrielian A.E."/>
            <person name="Garg N.S."/>
            <person name="Gelbart W.M."/>
            <person name="Glasser K."/>
            <person name="Glodek A."/>
            <person name="Gong F."/>
            <person name="Gorrell J.H."/>
            <person name="Gu Z."/>
            <person name="Guan P."/>
            <person name="Harris M."/>
            <person name="Harris N.L."/>
            <person name="Harvey D.A."/>
            <person name="Heiman T.J."/>
            <person name="Hernandez J.R."/>
            <person name="Houck J."/>
            <person name="Hostin D."/>
            <person name="Houston K.A."/>
            <person name="Howland T.J."/>
            <person name="Wei M.-H."/>
            <person name="Ibegwam C."/>
            <person name="Jalali M."/>
            <person name="Kalush F."/>
            <person name="Karpen G.H."/>
            <person name="Ke Z."/>
            <person name="Kennison J.A."/>
            <person name="Ketchum K.A."/>
            <person name="Kimmel B.E."/>
            <person name="Kodira C.D."/>
            <person name="Kraft C.L."/>
            <person name="Kravitz S."/>
            <person name="Kulp D."/>
            <person name="Lai Z."/>
            <person name="Lasko P."/>
            <person name="Lei Y."/>
            <person name="Levitsky A.A."/>
            <person name="Li J.H."/>
            <person name="Li Z."/>
            <person name="Liang Y."/>
            <person name="Lin X."/>
            <person name="Liu X."/>
            <person name="Mattei B."/>
            <person name="McIntosh T.C."/>
            <person name="McLeod M.P."/>
            <person name="McPherson D."/>
            <person name="Merkulov G."/>
            <person name="Milshina N.V."/>
            <person name="Mobarry C."/>
            <person name="Morris J."/>
            <person name="Moshrefi A."/>
            <person name="Mount S.M."/>
            <person name="Moy M."/>
            <person name="Murphy B."/>
            <person name="Murphy L."/>
            <person name="Muzny D.M."/>
            <person name="Nelson D.L."/>
            <person name="Nelson D.R."/>
            <person name="Nelson K.A."/>
            <person name="Nixon K."/>
            <person name="Nusskern D.R."/>
            <person name="Pacleb J.M."/>
            <person name="Palazzolo M."/>
            <person name="Pittman G.S."/>
            <person name="Pan S."/>
            <person name="Pollard J."/>
            <person name="Puri V."/>
            <person name="Reese M.G."/>
            <person name="Reinert K."/>
            <person name="Remington K."/>
            <person name="Saunders R.D.C."/>
            <person name="Scheeler F."/>
            <person name="Shen H."/>
            <person name="Shue B.C."/>
            <person name="Siden-Kiamos I."/>
            <person name="Simpson M."/>
            <person name="Skupski M.P."/>
            <person name="Smith T.J."/>
            <person name="Spier E."/>
            <person name="Spradling A.C."/>
            <person name="Stapleton M."/>
            <person name="Strong R."/>
            <person name="Sun E."/>
            <person name="Svirskas R."/>
            <person name="Tector C."/>
            <person name="Turner R."/>
            <person name="Venter E."/>
            <person name="Wang A.H."/>
            <person name="Wang X."/>
            <person name="Wang Z.-Y."/>
            <person name="Wassarman D.A."/>
            <person name="Weinstock G.M."/>
            <person name="Weissenbach J."/>
            <person name="Williams S.M."/>
            <person name="Woodage T."/>
            <person name="Worley K.C."/>
            <person name="Wu D."/>
            <person name="Yang S."/>
            <person name="Yao Q.A."/>
            <person name="Ye J."/>
            <person name="Yeh R.-F."/>
            <person name="Zaveri J.S."/>
            <person name="Zhan M."/>
            <person name="Zhang G."/>
            <person name="Zhao Q."/>
            <person name="Zheng L."/>
            <person name="Zheng X.H."/>
            <person name="Zhong F.N."/>
            <person name="Zhong W."/>
            <person name="Zhou X."/>
            <person name="Zhu S.C."/>
            <person name="Zhu X."/>
            <person name="Smith H.O."/>
            <person name="Gibbs R.A."/>
            <person name="Myers E.W."/>
            <person name="Rubin G.M."/>
            <person name="Venter J.C."/>
        </authorList>
    </citation>
    <scope>NUCLEOTIDE SEQUENCE [LARGE SCALE GENOMIC DNA]</scope>
    <source>
        <strain evidence="4">Berkeley</strain>
    </source>
</reference>
<reference evidence="9 10" key="2">
    <citation type="journal article" date="2002" name="Genome Biol.">
        <title>Annotation of the Drosophila melanogaster euchromatic genome: a systematic review.</title>
        <authorList>
            <person name="Misra S."/>
            <person name="Crosby M.A."/>
            <person name="Mungall C.J."/>
            <person name="Matthews B.B."/>
            <person name="Campbell K.S."/>
            <person name="Hradecky P."/>
            <person name="Huang Y."/>
            <person name="Kaminker J.S."/>
            <person name="Millburn G.H."/>
            <person name="Prochnik S.E."/>
            <person name="Smith C.D."/>
            <person name="Tupy J.L."/>
            <person name="Whitfield E.J."/>
            <person name="Bayraktaroglu L."/>
            <person name="Berman B.P."/>
            <person name="Bettencourt B.R."/>
            <person name="Celniker S.E."/>
            <person name="de Grey A.D.N.J."/>
            <person name="Drysdale R.A."/>
            <person name="Harris N.L."/>
            <person name="Richter J."/>
            <person name="Russo S."/>
            <person name="Schroeder A.J."/>
            <person name="Shu S.Q."/>
            <person name="Stapleton M."/>
            <person name="Yamada C."/>
            <person name="Ashburner M."/>
            <person name="Gelbart W.M."/>
            <person name="Rubin G.M."/>
            <person name="Lewis S.E."/>
        </authorList>
    </citation>
    <scope>GENOME REANNOTATION</scope>
    <scope>ALTERNATIVE SPLICING</scope>
    <source>
        <strain>Berkeley</strain>
    </source>
</reference>
<reference evidence="9 11" key="3">
    <citation type="submission" date="2006-10" db="EMBL/GenBank/DDBJ databases">
        <authorList>
            <person name="Stapleton M."/>
            <person name="Carlson J.W."/>
            <person name="Frise E."/>
            <person name="Kapadia B."/>
            <person name="Park S."/>
            <person name="Wan K.H."/>
            <person name="Yu C."/>
            <person name="Celniker S.E."/>
        </authorList>
    </citation>
    <scope>NUCLEOTIDE SEQUENCE [LARGE SCALE MRNA] OF 804-1192</scope>
    <source>
        <strain>Berkeley</strain>
    </source>
</reference>
<reference evidence="9" key="4">
    <citation type="journal article" date="2003" name="Genetics">
        <title>Recombination, dominance and selection on amino acid polymorphism in the Drosophila genome: contrasting patterns on the X and fourth chromosomes.</title>
        <authorList>
            <person name="Sheldahl L.A."/>
            <person name="Weinreich D.M."/>
            <person name="Rand D.M."/>
        </authorList>
    </citation>
    <scope>NUCLEOTIDE SEQUENCE [GENOMIC DNA] OF 831-1192</scope>
    <source>
        <strain>Crete24</strain>
        <strain>Crete26</strain>
        <strain>Crete30</strain>
        <strain>Crete31</strain>
        <strain>Crete35</strain>
        <strain>Crete40</strain>
        <strain>Crete42</strain>
        <strain>Crete43</strain>
        <strain>Crete44</strain>
        <strain>Crete8</strain>
        <strain>FTF1</strain>
        <strain>FTF105</strain>
        <strain>FTF14</strain>
        <strain>FTF2</strain>
        <strain>FTF20</strain>
        <strain>FTF23</strain>
        <strain>FTF26</strain>
        <strain>FTF28</strain>
        <strain>FTF5</strain>
        <strain>FTF6</strain>
        <strain>Zim11</strain>
        <strain>Zim2</strain>
        <strain>Zim30</strain>
        <strain>Zim53</strain>
    </source>
</reference>
<reference evidence="9" key="5">
    <citation type="journal article" date="1997" name="Cell">
        <title>Armadillo coactivates transcription driven by the product of the Drosophila segment polarity gene dTCF.</title>
        <authorList>
            <person name="van de Wetering M."/>
            <person name="Cavallo R.A."/>
            <person name="Dooijes D."/>
            <person name="van Beest M."/>
            <person name="van Es J."/>
            <person name="Loureiro J."/>
            <person name="Ypma A."/>
            <person name="Hursh D."/>
            <person name="Jones T."/>
            <person name="Bejsovec A."/>
            <person name="Peifer M."/>
            <person name="Mortin M."/>
            <person name="Clevers H."/>
        </authorList>
    </citation>
    <scope>FUNCTION</scope>
    <scope>DISRUPTION PHENOTYPE</scope>
</reference>
<reference evidence="9" key="6">
    <citation type="journal article" date="1997" name="Nature">
        <title>Pangolin encodes a Lef-1 homologue that acts downstream of Armadillo to transduce the Wingless signal in Drosophila.</title>
        <authorList>
            <person name="Brunner E."/>
            <person name="Peter O."/>
            <person name="Schweizer L."/>
            <person name="Basler K."/>
        </authorList>
    </citation>
    <scope>FUNCTION</scope>
</reference>
<reference evidence="9" key="7">
    <citation type="journal article" date="1998" name="Nature">
        <title>Drosophila Tcf and Groucho interact to repress Wingless signalling activity.</title>
        <authorList>
            <person name="Cavallo R.A."/>
            <person name="Cox R.T."/>
            <person name="Moline M.M."/>
            <person name="Roose J."/>
            <person name="Polevoy G.A."/>
            <person name="Clevers H."/>
            <person name="Peifer M."/>
            <person name="Bejsovec A."/>
        </authorList>
    </citation>
    <scope>FUNCTION</scope>
    <scope>INTERACTION WITH ARM AND GRO</scope>
    <scope>SUBCELLULAR LOCATION</scope>
</reference>
<organism>
    <name type="scientific">Drosophila melanogaster</name>
    <name type="common">Fruit fly</name>
    <dbReference type="NCBI Taxonomy" id="7227"/>
    <lineage>
        <taxon>Eukaryota</taxon>
        <taxon>Metazoa</taxon>
        <taxon>Ecdysozoa</taxon>
        <taxon>Arthropoda</taxon>
        <taxon>Hexapoda</taxon>
        <taxon>Insecta</taxon>
        <taxon>Pterygota</taxon>
        <taxon>Neoptera</taxon>
        <taxon>Endopterygota</taxon>
        <taxon>Diptera</taxon>
        <taxon>Brachycera</taxon>
        <taxon>Muscomorpha</taxon>
        <taxon>Ephydroidea</taxon>
        <taxon>Drosophilidae</taxon>
        <taxon>Drosophila</taxon>
        <taxon>Sophophora</taxon>
    </lineage>
</organism>
<dbReference type="EMBL" id="AE014135">
    <property type="protein sequence ID" value="AAN06549.2"/>
    <property type="molecule type" value="Genomic_DNA"/>
</dbReference>
<dbReference type="EMBL" id="BT029282">
    <property type="protein sequence ID" value="ABK30919.1"/>
    <property type="molecule type" value="mRNA"/>
</dbReference>
<dbReference type="EMBL" id="AY312729">
    <property type="protein sequence ID" value="AAQ67543.1"/>
    <property type="molecule type" value="Genomic_DNA"/>
</dbReference>
<dbReference type="EMBL" id="AY312730">
    <property type="protein sequence ID" value="AAQ67544.1"/>
    <property type="molecule type" value="Genomic_DNA"/>
</dbReference>
<dbReference type="EMBL" id="AY312731">
    <property type="protein sequence ID" value="AAQ67545.1"/>
    <property type="molecule type" value="Genomic_DNA"/>
</dbReference>
<dbReference type="EMBL" id="AY312732">
    <property type="protein sequence ID" value="AAQ67546.1"/>
    <property type="molecule type" value="Genomic_DNA"/>
</dbReference>
<dbReference type="EMBL" id="AY312733">
    <property type="protein sequence ID" value="AAQ67547.1"/>
    <property type="molecule type" value="Genomic_DNA"/>
</dbReference>
<dbReference type="EMBL" id="AY312734">
    <property type="protein sequence ID" value="AAQ67548.1"/>
    <property type="molecule type" value="Genomic_DNA"/>
</dbReference>
<dbReference type="EMBL" id="AY312735">
    <property type="protein sequence ID" value="AAQ67549.1"/>
    <property type="molecule type" value="Genomic_DNA"/>
</dbReference>
<dbReference type="EMBL" id="AY312736">
    <property type="protein sequence ID" value="AAQ67550.1"/>
    <property type="molecule type" value="Genomic_DNA"/>
</dbReference>
<dbReference type="EMBL" id="AY312737">
    <property type="protein sequence ID" value="AAQ67551.1"/>
    <property type="molecule type" value="Genomic_DNA"/>
</dbReference>
<dbReference type="EMBL" id="AY312738">
    <property type="protein sequence ID" value="AAQ67552.1"/>
    <property type="molecule type" value="Genomic_DNA"/>
</dbReference>
<dbReference type="EMBL" id="AY312739">
    <property type="protein sequence ID" value="AAQ67553.1"/>
    <property type="molecule type" value="Genomic_DNA"/>
</dbReference>
<dbReference type="EMBL" id="AY312740">
    <property type="protein sequence ID" value="AAQ67554.1"/>
    <property type="molecule type" value="Genomic_DNA"/>
</dbReference>
<dbReference type="EMBL" id="AY312741">
    <property type="protein sequence ID" value="AAQ67555.1"/>
    <property type="molecule type" value="Genomic_DNA"/>
</dbReference>
<dbReference type="EMBL" id="AY312742">
    <property type="protein sequence ID" value="AAQ67556.1"/>
    <property type="molecule type" value="Genomic_DNA"/>
</dbReference>
<dbReference type="EMBL" id="AY312743">
    <property type="protein sequence ID" value="AAQ67557.1"/>
    <property type="molecule type" value="Genomic_DNA"/>
</dbReference>
<dbReference type="EMBL" id="AY312744">
    <property type="protein sequence ID" value="AAQ67558.1"/>
    <property type="molecule type" value="Genomic_DNA"/>
</dbReference>
<dbReference type="EMBL" id="AY312745">
    <property type="protein sequence ID" value="AAQ67559.1"/>
    <property type="molecule type" value="Genomic_DNA"/>
</dbReference>
<dbReference type="EMBL" id="AY312746">
    <property type="protein sequence ID" value="AAQ67560.1"/>
    <property type="molecule type" value="Genomic_DNA"/>
</dbReference>
<dbReference type="EMBL" id="AY312747">
    <property type="protein sequence ID" value="AAQ67561.1"/>
    <property type="molecule type" value="Genomic_DNA"/>
</dbReference>
<dbReference type="EMBL" id="AY312748">
    <property type="protein sequence ID" value="AAQ67562.1"/>
    <property type="molecule type" value="Genomic_DNA"/>
</dbReference>
<dbReference type="EMBL" id="AY312749">
    <property type="protein sequence ID" value="AAQ67563.1"/>
    <property type="molecule type" value="Genomic_DNA"/>
</dbReference>
<dbReference type="EMBL" id="AY312750">
    <property type="protein sequence ID" value="AAQ67564.1"/>
    <property type="molecule type" value="Genomic_DNA"/>
</dbReference>
<dbReference type="EMBL" id="AY312751">
    <property type="protein sequence ID" value="AAQ67565.1"/>
    <property type="molecule type" value="Genomic_DNA"/>
</dbReference>
<dbReference type="EMBL" id="AY312752">
    <property type="protein sequence ID" value="AAQ67566.1"/>
    <property type="molecule type" value="Genomic_DNA"/>
</dbReference>
<dbReference type="RefSeq" id="NP_726528.2">
    <molecule id="Q8IMA8-1"/>
    <property type="nucleotide sequence ID" value="NM_166724.4"/>
</dbReference>
<dbReference type="SMR" id="Q8IMA8"/>
<dbReference type="BioGRID" id="68607">
    <property type="interactions" value="75"/>
</dbReference>
<dbReference type="ComplexPortal" id="CPX-2563">
    <property type="entry name" value="Wnt enhanceosome complex"/>
</dbReference>
<dbReference type="FunCoup" id="Q8IMA8">
    <property type="interactions" value="148"/>
</dbReference>
<dbReference type="IntAct" id="Q8IMA8">
    <property type="interactions" value="9"/>
</dbReference>
<dbReference type="STRING" id="7227.FBpp0111569"/>
<dbReference type="GlyGen" id="Q8IMA8">
    <property type="glycosylation" value="1 site"/>
</dbReference>
<dbReference type="PaxDb" id="7227-FBpp0111569"/>
<dbReference type="DNASU" id="43769"/>
<dbReference type="EnsemblMetazoa" id="FBtr0112657">
    <molecule id="Q8IMA8-1"/>
    <property type="protein sequence ID" value="FBpp0111569"/>
    <property type="gene ID" value="FBgn0085432"/>
</dbReference>
<dbReference type="GeneID" id="43769"/>
<dbReference type="AGR" id="FB:FBgn0085432"/>
<dbReference type="CTD" id="43769"/>
<dbReference type="FlyBase" id="FBgn0085432">
    <property type="gene designation" value="pan"/>
</dbReference>
<dbReference type="VEuPathDB" id="VectorBase:FBgn0085432"/>
<dbReference type="eggNOG" id="KOG3248">
    <property type="taxonomic scope" value="Eukaryota"/>
</dbReference>
<dbReference type="GeneTree" id="ENSGT00940000168653"/>
<dbReference type="HOGENOM" id="CLU_271719_0_0_1"/>
<dbReference type="InParanoid" id="Q8IMA8"/>
<dbReference type="OrthoDB" id="2307332at2759"/>
<dbReference type="PhylomeDB" id="Q8IMA8"/>
<dbReference type="Reactome" id="R-DME-201722">
    <property type="pathway name" value="Formation of the beta-catenin:TCF transactivating complex"/>
</dbReference>
<dbReference type="Reactome" id="R-DME-3769402">
    <property type="pathway name" value="Deactivation of the beta-catenin transactivating complex"/>
</dbReference>
<dbReference type="Reactome" id="R-DME-4086398">
    <property type="pathway name" value="Ca2+ pathway"/>
</dbReference>
<dbReference type="Reactome" id="R-DME-4641265">
    <property type="pathway name" value="Repression of WNT target genes"/>
</dbReference>
<dbReference type="Reactome" id="R-DME-8853884">
    <property type="pathway name" value="Transcriptional Regulation by VENTX"/>
</dbReference>
<dbReference type="Reactome" id="R-DME-8951430">
    <property type="pathway name" value="RUNX3 regulates WNT signaling"/>
</dbReference>
<dbReference type="Reactome" id="R-DME-9825892">
    <property type="pathway name" value="Regulation of MITF-M-dependent genes involved in cell cycle and proliferation"/>
</dbReference>
<dbReference type="SignaLink" id="Q8IMA8"/>
<dbReference type="BioGRID-ORCS" id="43769">
    <property type="hits" value="0 hits in 3 CRISPR screens"/>
</dbReference>
<dbReference type="ChiTaRS" id="pan">
    <property type="organism name" value="fly"/>
</dbReference>
<dbReference type="GenomeRNAi" id="43769"/>
<dbReference type="Proteomes" id="UP000000803">
    <property type="component" value="Chromosome 4"/>
</dbReference>
<dbReference type="Bgee" id="FBgn0085432">
    <property type="expression patterns" value="Expressed in lamina monopolar neuron L1 (Drosophila) in insect head and 294 other cell types or tissues"/>
</dbReference>
<dbReference type="ExpressionAtlas" id="Q8IMA8">
    <property type="expression patterns" value="baseline and differential"/>
</dbReference>
<dbReference type="GO" id="GO:1990907">
    <property type="term" value="C:beta-catenin-TCF complex"/>
    <property type="evidence" value="ECO:0000315"/>
    <property type="project" value="FlyBase"/>
</dbReference>
<dbReference type="GO" id="GO:0000785">
    <property type="term" value="C:chromatin"/>
    <property type="evidence" value="ECO:0000318"/>
    <property type="project" value="GO_Central"/>
</dbReference>
<dbReference type="GO" id="GO:0005634">
    <property type="term" value="C:nucleus"/>
    <property type="evidence" value="ECO:0000314"/>
    <property type="project" value="FlyBase"/>
</dbReference>
<dbReference type="GO" id="GO:0005667">
    <property type="term" value="C:transcription regulator complex"/>
    <property type="evidence" value="ECO:0000353"/>
    <property type="project" value="FlyBase"/>
</dbReference>
<dbReference type="GO" id="GO:0001228">
    <property type="term" value="F:DNA-binding transcription activator activity, RNA polymerase II-specific"/>
    <property type="evidence" value="ECO:0000314"/>
    <property type="project" value="FlyBase"/>
</dbReference>
<dbReference type="GO" id="GO:0000981">
    <property type="term" value="F:DNA-binding transcription factor activity, RNA polymerase II-specific"/>
    <property type="evidence" value="ECO:0000314"/>
    <property type="project" value="FlyBase"/>
</dbReference>
<dbReference type="GO" id="GO:0019900">
    <property type="term" value="F:kinase binding"/>
    <property type="evidence" value="ECO:0000353"/>
    <property type="project" value="FlyBase"/>
</dbReference>
<dbReference type="GO" id="GO:0000978">
    <property type="term" value="F:RNA polymerase II cis-regulatory region sequence-specific DNA binding"/>
    <property type="evidence" value="ECO:0000314"/>
    <property type="project" value="FlyBase"/>
</dbReference>
<dbReference type="GO" id="GO:0001222">
    <property type="term" value="F:transcription corepressor binding"/>
    <property type="evidence" value="ECO:0000353"/>
    <property type="project" value="FlyBase"/>
</dbReference>
<dbReference type="GO" id="GO:0060070">
    <property type="term" value="P:canonical Wnt signaling pathway"/>
    <property type="evidence" value="ECO:0000314"/>
    <property type="project" value="FlyBase"/>
</dbReference>
<dbReference type="GO" id="GO:0090254">
    <property type="term" value="P:cell elongation involved in imaginal disc-derived wing morphogenesis"/>
    <property type="evidence" value="ECO:0000315"/>
    <property type="project" value="FlyBase"/>
</dbReference>
<dbReference type="GO" id="GO:0035293">
    <property type="term" value="P:chitin-based larval cuticle pattern formation"/>
    <property type="evidence" value="ECO:0000316"/>
    <property type="project" value="FlyBase"/>
</dbReference>
<dbReference type="GO" id="GO:0048546">
    <property type="term" value="P:digestive tract morphogenesis"/>
    <property type="evidence" value="ECO:0000315"/>
    <property type="project" value="FlyBase"/>
</dbReference>
<dbReference type="GO" id="GO:0009880">
    <property type="term" value="P:embryonic pattern specification"/>
    <property type="evidence" value="ECO:0000315"/>
    <property type="project" value="FlyBase"/>
</dbReference>
<dbReference type="GO" id="GO:0007507">
    <property type="term" value="P:heart development"/>
    <property type="evidence" value="ECO:0000315"/>
    <property type="project" value="FlyBase"/>
</dbReference>
<dbReference type="GO" id="GO:0007476">
    <property type="term" value="P:imaginal disc-derived wing morphogenesis"/>
    <property type="evidence" value="ECO:0000315"/>
    <property type="project" value="FlyBase"/>
</dbReference>
<dbReference type="GO" id="GO:0007500">
    <property type="term" value="P:mesodermal cell fate determination"/>
    <property type="evidence" value="ECO:0000304"/>
    <property type="project" value="FlyBase"/>
</dbReference>
<dbReference type="GO" id="GO:0045892">
    <property type="term" value="P:negative regulation of DNA-templated transcription"/>
    <property type="evidence" value="ECO:0000315"/>
    <property type="project" value="UniProtKB"/>
</dbReference>
<dbReference type="GO" id="GO:0000122">
    <property type="term" value="P:negative regulation of transcription by RNA polymerase II"/>
    <property type="evidence" value="ECO:0000314"/>
    <property type="project" value="FlyBase"/>
</dbReference>
<dbReference type="GO" id="GO:0045893">
    <property type="term" value="P:positive regulation of DNA-templated transcription"/>
    <property type="evidence" value="ECO:0000315"/>
    <property type="project" value="UniProtKB"/>
</dbReference>
<dbReference type="GO" id="GO:0010628">
    <property type="term" value="P:positive regulation of gene expression"/>
    <property type="evidence" value="ECO:0000315"/>
    <property type="project" value="FlyBase"/>
</dbReference>
<dbReference type="GO" id="GO:0045944">
    <property type="term" value="P:positive regulation of transcription by RNA polymerase II"/>
    <property type="evidence" value="ECO:0000314"/>
    <property type="project" value="FlyBase"/>
</dbReference>
<dbReference type="GO" id="GO:0006355">
    <property type="term" value="P:regulation of DNA-templated transcription"/>
    <property type="evidence" value="ECO:0000315"/>
    <property type="project" value="UniProtKB"/>
</dbReference>
<dbReference type="GO" id="GO:0072091">
    <property type="term" value="P:regulation of stem cell proliferation"/>
    <property type="evidence" value="ECO:0000315"/>
    <property type="project" value="FlyBase"/>
</dbReference>
<dbReference type="GO" id="GO:0006357">
    <property type="term" value="P:regulation of transcription by RNA polymerase II"/>
    <property type="evidence" value="ECO:0000318"/>
    <property type="project" value="GO_Central"/>
</dbReference>
<dbReference type="GO" id="GO:0007435">
    <property type="term" value="P:salivary gland morphogenesis"/>
    <property type="evidence" value="ECO:0000315"/>
    <property type="project" value="FlyBase"/>
</dbReference>
<dbReference type="GO" id="GO:0007367">
    <property type="term" value="P:segment polarity determination"/>
    <property type="evidence" value="ECO:0000316"/>
    <property type="project" value="FlyBase"/>
</dbReference>
<dbReference type="GO" id="GO:0035277">
    <property type="term" value="P:spiracle morphogenesis, open tracheal system"/>
    <property type="evidence" value="ECO:0000315"/>
    <property type="project" value="FlyBase"/>
</dbReference>
<dbReference type="CDD" id="cd21996">
    <property type="entry name" value="HMG-box_TCF7-like"/>
    <property type="match status" value="1"/>
</dbReference>
<dbReference type="FunFam" id="1.10.30.10:FF:000001">
    <property type="entry name" value="transcription factor 7 isoform X2"/>
    <property type="match status" value="1"/>
</dbReference>
<dbReference type="Gene3D" id="1.10.30.10">
    <property type="entry name" value="High mobility group box domain"/>
    <property type="match status" value="1"/>
</dbReference>
<dbReference type="InterPro" id="IPR009071">
    <property type="entry name" value="HMG_box_dom"/>
</dbReference>
<dbReference type="InterPro" id="IPR036910">
    <property type="entry name" value="HMG_box_dom_sf"/>
</dbReference>
<dbReference type="InterPro" id="IPR024940">
    <property type="entry name" value="TCF/LEF"/>
</dbReference>
<dbReference type="PANTHER" id="PTHR10373:SF38">
    <property type="entry name" value="PROTEIN PANGOLIN, ISOFORM J"/>
    <property type="match status" value="1"/>
</dbReference>
<dbReference type="PANTHER" id="PTHR10373">
    <property type="entry name" value="TRANSCRIPTION FACTOR 7 FAMILY MEMBER"/>
    <property type="match status" value="1"/>
</dbReference>
<dbReference type="Pfam" id="PF00505">
    <property type="entry name" value="HMG_box"/>
    <property type="match status" value="1"/>
</dbReference>
<dbReference type="SMART" id="SM01366">
    <property type="entry name" value="c-clamp"/>
    <property type="match status" value="1"/>
</dbReference>
<dbReference type="SMART" id="SM00398">
    <property type="entry name" value="HMG"/>
    <property type="match status" value="1"/>
</dbReference>
<dbReference type="SUPFAM" id="SSF47095">
    <property type="entry name" value="HMG-box"/>
    <property type="match status" value="1"/>
</dbReference>
<dbReference type="PROSITE" id="PS50118">
    <property type="entry name" value="HMG_BOX_2"/>
    <property type="match status" value="1"/>
</dbReference>
<evidence type="ECO:0000255" key="1"/>
<evidence type="ECO:0000255" key="2">
    <source>
        <dbReference type="PROSITE-ProRule" id="PRU00267"/>
    </source>
</evidence>
<evidence type="ECO:0000256" key="3">
    <source>
        <dbReference type="SAM" id="MobiDB-lite"/>
    </source>
</evidence>
<evidence type="ECO:0000269" key="4">
    <source>
    </source>
</evidence>
<evidence type="ECO:0000269" key="5">
    <source>
    </source>
</evidence>
<evidence type="ECO:0000269" key="6">
    <source>
    </source>
</evidence>
<evidence type="ECO:0000269" key="7">
    <source>
    </source>
</evidence>
<evidence type="ECO:0000303" key="8">
    <source>
    </source>
</evidence>
<evidence type="ECO:0000305" key="9"/>
<evidence type="ECO:0000312" key="10">
    <source>
        <dbReference type="EMBL" id="AAN06549.2"/>
    </source>
</evidence>
<evidence type="ECO:0000312" key="11">
    <source>
        <dbReference type="EMBL" id="ABK30919.1"/>
    </source>
</evidence>
<evidence type="ECO:0000312" key="12">
    <source>
        <dbReference type="FlyBase" id="FBgn0085432"/>
    </source>
</evidence>